<comment type="similarity">
    <text evidence="1">Belongs to the polypeptide deformylase family.</text>
</comment>
<evidence type="ECO:0000255" key="1">
    <source>
        <dbReference type="HAMAP-Rule" id="MF_00163"/>
    </source>
</evidence>
<gene>
    <name type="ordered locus">SAS1149</name>
</gene>
<organism>
    <name type="scientific">Staphylococcus aureus (strain MSSA476)</name>
    <dbReference type="NCBI Taxonomy" id="282459"/>
    <lineage>
        <taxon>Bacteria</taxon>
        <taxon>Bacillati</taxon>
        <taxon>Bacillota</taxon>
        <taxon>Bacilli</taxon>
        <taxon>Bacillales</taxon>
        <taxon>Staphylococcaceae</taxon>
        <taxon>Staphylococcus</taxon>
    </lineage>
</organism>
<feature type="chain" id="PRO_0000082900" description="Peptide deformylase-like">
    <location>
        <begin position="1"/>
        <end position="162"/>
    </location>
</feature>
<proteinExistence type="inferred from homology"/>
<name>DEFL_STAAS</name>
<sequence>MAIKKLVPASHPILTKKAQAVIKFDDSLKRLLQDLEDTMYAQEAAGLCAPQINQSLQVAIIDMEMEGLLQLVNPKIISQSNETITDLEGSITLPDVYGEVTRSKMIVVESYDVNGNKVELTAHEDVARMILHIIDQMNGIPFTERADRILTDKEVEAYFIND</sequence>
<dbReference type="EMBL" id="BX571857">
    <property type="protein sequence ID" value="CAG42926.1"/>
    <property type="molecule type" value="Genomic_DNA"/>
</dbReference>
<dbReference type="RefSeq" id="WP_000985287.1">
    <property type="nucleotide sequence ID" value="NC_002953.3"/>
</dbReference>
<dbReference type="SMR" id="Q6G9Z8"/>
<dbReference type="KEGG" id="sas:SAS1149"/>
<dbReference type="HOGENOM" id="CLU_061901_4_1_9"/>
<dbReference type="GO" id="GO:0042586">
    <property type="term" value="F:peptide deformylase activity"/>
    <property type="evidence" value="ECO:0007669"/>
    <property type="project" value="UniProtKB-UniRule"/>
</dbReference>
<dbReference type="GO" id="GO:0043686">
    <property type="term" value="P:co-translational protein modification"/>
    <property type="evidence" value="ECO:0007669"/>
    <property type="project" value="TreeGrafter"/>
</dbReference>
<dbReference type="GO" id="GO:0006412">
    <property type="term" value="P:translation"/>
    <property type="evidence" value="ECO:0007669"/>
    <property type="project" value="UniProtKB-UniRule"/>
</dbReference>
<dbReference type="CDD" id="cd00487">
    <property type="entry name" value="Pep_deformylase"/>
    <property type="match status" value="1"/>
</dbReference>
<dbReference type="Gene3D" id="3.90.45.10">
    <property type="entry name" value="Peptide deformylase"/>
    <property type="match status" value="1"/>
</dbReference>
<dbReference type="HAMAP" id="MF_00163">
    <property type="entry name" value="Pep_deformylase"/>
    <property type="match status" value="1"/>
</dbReference>
<dbReference type="InterPro" id="IPR023635">
    <property type="entry name" value="Peptide_deformylase"/>
</dbReference>
<dbReference type="InterPro" id="IPR036821">
    <property type="entry name" value="Peptide_deformylase_sf"/>
</dbReference>
<dbReference type="NCBIfam" id="TIGR00079">
    <property type="entry name" value="pept_deformyl"/>
    <property type="match status" value="1"/>
</dbReference>
<dbReference type="NCBIfam" id="NF011189">
    <property type="entry name" value="PRK14595.1"/>
    <property type="match status" value="1"/>
</dbReference>
<dbReference type="PANTHER" id="PTHR10458">
    <property type="entry name" value="PEPTIDE DEFORMYLASE"/>
    <property type="match status" value="1"/>
</dbReference>
<dbReference type="PANTHER" id="PTHR10458:SF22">
    <property type="entry name" value="PEPTIDE DEFORMYLASE"/>
    <property type="match status" value="1"/>
</dbReference>
<dbReference type="Pfam" id="PF01327">
    <property type="entry name" value="Pep_deformylase"/>
    <property type="match status" value="1"/>
</dbReference>
<dbReference type="PIRSF" id="PIRSF004749">
    <property type="entry name" value="Pep_def"/>
    <property type="match status" value="1"/>
</dbReference>
<dbReference type="PRINTS" id="PR01576">
    <property type="entry name" value="PDEFORMYLASE"/>
</dbReference>
<dbReference type="SUPFAM" id="SSF56420">
    <property type="entry name" value="Peptide deformylase"/>
    <property type="match status" value="1"/>
</dbReference>
<reference key="1">
    <citation type="journal article" date="2004" name="Proc. Natl. Acad. Sci. U.S.A.">
        <title>Complete genomes of two clinical Staphylococcus aureus strains: evidence for the rapid evolution of virulence and drug resistance.</title>
        <authorList>
            <person name="Holden M.T.G."/>
            <person name="Feil E.J."/>
            <person name="Lindsay J.A."/>
            <person name="Peacock S.J."/>
            <person name="Day N.P.J."/>
            <person name="Enright M.C."/>
            <person name="Foster T.J."/>
            <person name="Moore C.E."/>
            <person name="Hurst L."/>
            <person name="Atkin R."/>
            <person name="Barron A."/>
            <person name="Bason N."/>
            <person name="Bentley S.D."/>
            <person name="Chillingworth C."/>
            <person name="Chillingworth T."/>
            <person name="Churcher C."/>
            <person name="Clark L."/>
            <person name="Corton C."/>
            <person name="Cronin A."/>
            <person name="Doggett J."/>
            <person name="Dowd L."/>
            <person name="Feltwell T."/>
            <person name="Hance Z."/>
            <person name="Harris B."/>
            <person name="Hauser H."/>
            <person name="Holroyd S."/>
            <person name="Jagels K."/>
            <person name="James K.D."/>
            <person name="Lennard N."/>
            <person name="Line A."/>
            <person name="Mayes R."/>
            <person name="Moule S."/>
            <person name="Mungall K."/>
            <person name="Ormond D."/>
            <person name="Quail M.A."/>
            <person name="Rabbinowitsch E."/>
            <person name="Rutherford K.M."/>
            <person name="Sanders M."/>
            <person name="Sharp S."/>
            <person name="Simmonds M."/>
            <person name="Stevens K."/>
            <person name="Whitehead S."/>
            <person name="Barrell B.G."/>
            <person name="Spratt B.G."/>
            <person name="Parkhill J."/>
        </authorList>
    </citation>
    <scope>NUCLEOTIDE SEQUENCE [LARGE SCALE GENOMIC DNA]</scope>
    <source>
        <strain>MSSA476</strain>
    </source>
</reference>
<protein>
    <recommendedName>
        <fullName evidence="1">Peptide deformylase-like</fullName>
    </recommendedName>
    <alternativeName>
        <fullName evidence="1">Polypeptide deformylase-like</fullName>
    </alternativeName>
</protein>
<accession>Q6G9Z8</accession>